<evidence type="ECO:0000255" key="1">
    <source>
        <dbReference type="HAMAP-Rule" id="MF_01630"/>
    </source>
</evidence>
<dbReference type="EC" id="1.9.6.1" evidence="1"/>
<dbReference type="EMBL" id="CP001091">
    <property type="protein sequence ID" value="ACE62156.1"/>
    <property type="molecule type" value="Genomic_DNA"/>
</dbReference>
<dbReference type="RefSeq" id="WP_005619821.1">
    <property type="nucleotide sequence ID" value="NC_010939.1"/>
</dbReference>
<dbReference type="SMR" id="B3H2D1"/>
<dbReference type="GeneID" id="48599711"/>
<dbReference type="KEGG" id="apa:APP7_1504"/>
<dbReference type="HOGENOM" id="CLU_000422_13_4_6"/>
<dbReference type="Proteomes" id="UP000001226">
    <property type="component" value="Chromosome"/>
</dbReference>
<dbReference type="GO" id="GO:0016020">
    <property type="term" value="C:membrane"/>
    <property type="evidence" value="ECO:0007669"/>
    <property type="project" value="TreeGrafter"/>
</dbReference>
<dbReference type="GO" id="GO:0009325">
    <property type="term" value="C:nitrate reductase complex"/>
    <property type="evidence" value="ECO:0007669"/>
    <property type="project" value="TreeGrafter"/>
</dbReference>
<dbReference type="GO" id="GO:0042597">
    <property type="term" value="C:periplasmic space"/>
    <property type="evidence" value="ECO:0007669"/>
    <property type="project" value="UniProtKB-SubCell"/>
</dbReference>
<dbReference type="GO" id="GO:0051539">
    <property type="term" value="F:4 iron, 4 sulfur cluster binding"/>
    <property type="evidence" value="ECO:0007669"/>
    <property type="project" value="UniProtKB-KW"/>
</dbReference>
<dbReference type="GO" id="GO:0009055">
    <property type="term" value="F:electron transfer activity"/>
    <property type="evidence" value="ECO:0007669"/>
    <property type="project" value="UniProtKB-UniRule"/>
</dbReference>
<dbReference type="GO" id="GO:0005506">
    <property type="term" value="F:iron ion binding"/>
    <property type="evidence" value="ECO:0007669"/>
    <property type="project" value="UniProtKB-UniRule"/>
</dbReference>
<dbReference type="GO" id="GO:0030151">
    <property type="term" value="F:molybdenum ion binding"/>
    <property type="evidence" value="ECO:0007669"/>
    <property type="project" value="InterPro"/>
</dbReference>
<dbReference type="GO" id="GO:0043546">
    <property type="term" value="F:molybdopterin cofactor binding"/>
    <property type="evidence" value="ECO:0007669"/>
    <property type="project" value="InterPro"/>
</dbReference>
<dbReference type="GO" id="GO:0050140">
    <property type="term" value="F:nitrate reductase (cytochrome) activity"/>
    <property type="evidence" value="ECO:0007669"/>
    <property type="project" value="UniProtKB-EC"/>
</dbReference>
<dbReference type="GO" id="GO:0045333">
    <property type="term" value="P:cellular respiration"/>
    <property type="evidence" value="ECO:0007669"/>
    <property type="project" value="UniProtKB-ARBA"/>
</dbReference>
<dbReference type="GO" id="GO:0006777">
    <property type="term" value="P:Mo-molybdopterin cofactor biosynthetic process"/>
    <property type="evidence" value="ECO:0007669"/>
    <property type="project" value="UniProtKB-UniRule"/>
</dbReference>
<dbReference type="GO" id="GO:0042128">
    <property type="term" value="P:nitrate assimilation"/>
    <property type="evidence" value="ECO:0007669"/>
    <property type="project" value="UniProtKB-UniRule"/>
</dbReference>
<dbReference type="CDD" id="cd02791">
    <property type="entry name" value="MopB_CT_Nitrate-R-NapA-like"/>
    <property type="match status" value="1"/>
</dbReference>
<dbReference type="CDD" id="cd02754">
    <property type="entry name" value="MopB_Nitrate-R-NapA-like"/>
    <property type="match status" value="1"/>
</dbReference>
<dbReference type="FunFam" id="2.40.40.20:FF:000005">
    <property type="entry name" value="Periplasmic nitrate reductase"/>
    <property type="match status" value="1"/>
</dbReference>
<dbReference type="Gene3D" id="2.40.40.20">
    <property type="match status" value="1"/>
</dbReference>
<dbReference type="Gene3D" id="3.30.200.210">
    <property type="match status" value="1"/>
</dbReference>
<dbReference type="Gene3D" id="3.40.50.740">
    <property type="match status" value="1"/>
</dbReference>
<dbReference type="Gene3D" id="3.40.228.10">
    <property type="entry name" value="Dimethylsulfoxide Reductase, domain 2"/>
    <property type="match status" value="1"/>
</dbReference>
<dbReference type="HAMAP" id="MF_01630">
    <property type="entry name" value="Nitrate_reduct_NapA"/>
    <property type="match status" value="1"/>
</dbReference>
<dbReference type="InterPro" id="IPR009010">
    <property type="entry name" value="Asp_de-COase-like_dom_sf"/>
</dbReference>
<dbReference type="InterPro" id="IPR041957">
    <property type="entry name" value="CT_Nitrate-R-NapA-like"/>
</dbReference>
<dbReference type="InterPro" id="IPR006657">
    <property type="entry name" value="MoPterin_dinucl-bd_dom"/>
</dbReference>
<dbReference type="InterPro" id="IPR006656">
    <property type="entry name" value="Mopterin_OxRdtase"/>
</dbReference>
<dbReference type="InterPro" id="IPR006963">
    <property type="entry name" value="Mopterin_OxRdtase_4Fe-4S_dom"/>
</dbReference>
<dbReference type="InterPro" id="IPR027467">
    <property type="entry name" value="MopterinOxRdtase_cofactor_BS"/>
</dbReference>
<dbReference type="InterPro" id="IPR010051">
    <property type="entry name" value="Periplasm_NO3_reductase_lsu"/>
</dbReference>
<dbReference type="InterPro" id="IPR050123">
    <property type="entry name" value="Prok_molybdopt-oxidoreductase"/>
</dbReference>
<dbReference type="InterPro" id="IPR006311">
    <property type="entry name" value="TAT_signal"/>
</dbReference>
<dbReference type="InterPro" id="IPR019546">
    <property type="entry name" value="TAT_signal_bac_arc"/>
</dbReference>
<dbReference type="NCBIfam" id="TIGR01706">
    <property type="entry name" value="NAPA"/>
    <property type="match status" value="1"/>
</dbReference>
<dbReference type="NCBIfam" id="NF010055">
    <property type="entry name" value="PRK13532.1"/>
    <property type="match status" value="1"/>
</dbReference>
<dbReference type="NCBIfam" id="TIGR01409">
    <property type="entry name" value="TAT_signal_seq"/>
    <property type="match status" value="1"/>
</dbReference>
<dbReference type="PANTHER" id="PTHR43105:SF11">
    <property type="entry name" value="PERIPLASMIC NITRATE REDUCTASE"/>
    <property type="match status" value="1"/>
</dbReference>
<dbReference type="PANTHER" id="PTHR43105">
    <property type="entry name" value="RESPIRATORY NITRATE REDUCTASE"/>
    <property type="match status" value="1"/>
</dbReference>
<dbReference type="Pfam" id="PF04879">
    <property type="entry name" value="Molybdop_Fe4S4"/>
    <property type="match status" value="1"/>
</dbReference>
<dbReference type="Pfam" id="PF00384">
    <property type="entry name" value="Molybdopterin"/>
    <property type="match status" value="1"/>
</dbReference>
<dbReference type="Pfam" id="PF01568">
    <property type="entry name" value="Molydop_binding"/>
    <property type="match status" value="1"/>
</dbReference>
<dbReference type="Pfam" id="PF10518">
    <property type="entry name" value="TAT_signal"/>
    <property type="match status" value="1"/>
</dbReference>
<dbReference type="SMART" id="SM00926">
    <property type="entry name" value="Molybdop_Fe4S4"/>
    <property type="match status" value="1"/>
</dbReference>
<dbReference type="SUPFAM" id="SSF50692">
    <property type="entry name" value="ADC-like"/>
    <property type="match status" value="1"/>
</dbReference>
<dbReference type="SUPFAM" id="SSF53706">
    <property type="entry name" value="Formate dehydrogenase/DMSO reductase, domains 1-3"/>
    <property type="match status" value="1"/>
</dbReference>
<dbReference type="PROSITE" id="PS51669">
    <property type="entry name" value="4FE4S_MOW_BIS_MGD"/>
    <property type="match status" value="1"/>
</dbReference>
<dbReference type="PROSITE" id="PS00551">
    <property type="entry name" value="MOLYBDOPTERIN_PROK_1"/>
    <property type="match status" value="1"/>
</dbReference>
<dbReference type="PROSITE" id="PS51318">
    <property type="entry name" value="TAT"/>
    <property type="match status" value="1"/>
</dbReference>
<proteinExistence type="inferred from homology"/>
<feature type="signal peptide" description="Tat-type signal" evidence="1">
    <location>
        <begin position="1"/>
        <end position="32"/>
    </location>
</feature>
<feature type="chain" id="PRO_1000186348" description="Periplasmic nitrate reductase" evidence="1">
    <location>
        <begin position="33"/>
        <end position="827"/>
    </location>
</feature>
<feature type="domain" description="4Fe-4S Mo/W bis-MGD-type" evidence="1">
    <location>
        <begin position="37"/>
        <end position="93"/>
    </location>
</feature>
<feature type="binding site" evidence="1">
    <location>
        <position position="44"/>
    </location>
    <ligand>
        <name>[4Fe-4S] cluster</name>
        <dbReference type="ChEBI" id="CHEBI:49883"/>
    </ligand>
</feature>
<feature type="binding site" evidence="1">
    <location>
        <position position="47"/>
    </location>
    <ligand>
        <name>[4Fe-4S] cluster</name>
        <dbReference type="ChEBI" id="CHEBI:49883"/>
    </ligand>
</feature>
<feature type="binding site" evidence="1">
    <location>
        <position position="51"/>
    </location>
    <ligand>
        <name>[4Fe-4S] cluster</name>
        <dbReference type="ChEBI" id="CHEBI:49883"/>
    </ligand>
</feature>
<feature type="binding site" evidence="1">
    <location>
        <position position="79"/>
    </location>
    <ligand>
        <name>[4Fe-4S] cluster</name>
        <dbReference type="ChEBI" id="CHEBI:49883"/>
    </ligand>
</feature>
<feature type="binding site" evidence="1">
    <location>
        <position position="81"/>
    </location>
    <ligand>
        <name>Mo-bis(molybdopterin guanine dinucleotide)</name>
        <dbReference type="ChEBI" id="CHEBI:60539"/>
    </ligand>
</feature>
<feature type="binding site" evidence="1">
    <location>
        <position position="148"/>
    </location>
    <ligand>
        <name>Mo-bis(molybdopterin guanine dinucleotide)</name>
        <dbReference type="ChEBI" id="CHEBI:60539"/>
    </ligand>
</feature>
<feature type="binding site" evidence="1">
    <location>
        <position position="173"/>
    </location>
    <ligand>
        <name>Mo-bis(molybdopterin guanine dinucleotide)</name>
        <dbReference type="ChEBI" id="CHEBI:60539"/>
    </ligand>
</feature>
<feature type="binding site" evidence="1">
    <location>
        <position position="177"/>
    </location>
    <ligand>
        <name>Mo-bis(molybdopterin guanine dinucleotide)</name>
        <dbReference type="ChEBI" id="CHEBI:60539"/>
    </ligand>
</feature>
<feature type="binding site" evidence="1">
    <location>
        <begin position="210"/>
        <end position="217"/>
    </location>
    <ligand>
        <name>Mo-bis(molybdopterin guanine dinucleotide)</name>
        <dbReference type="ChEBI" id="CHEBI:60539"/>
    </ligand>
</feature>
<feature type="binding site" evidence="1">
    <location>
        <begin position="241"/>
        <end position="245"/>
    </location>
    <ligand>
        <name>Mo-bis(molybdopterin guanine dinucleotide)</name>
        <dbReference type="ChEBI" id="CHEBI:60539"/>
    </ligand>
</feature>
<feature type="binding site" evidence="1">
    <location>
        <position position="371"/>
    </location>
    <ligand>
        <name>Mo-bis(molybdopterin guanine dinucleotide)</name>
        <dbReference type="ChEBI" id="CHEBI:60539"/>
    </ligand>
</feature>
<feature type="binding site" evidence="1">
    <location>
        <position position="375"/>
    </location>
    <ligand>
        <name>Mo-bis(molybdopterin guanine dinucleotide)</name>
        <dbReference type="ChEBI" id="CHEBI:60539"/>
    </ligand>
</feature>
<feature type="binding site" evidence="1">
    <location>
        <position position="481"/>
    </location>
    <ligand>
        <name>Mo-bis(molybdopterin guanine dinucleotide)</name>
        <dbReference type="ChEBI" id="CHEBI:60539"/>
    </ligand>
</feature>
<feature type="binding site" evidence="1">
    <location>
        <begin position="507"/>
        <end position="508"/>
    </location>
    <ligand>
        <name>Mo-bis(molybdopterin guanine dinucleotide)</name>
        <dbReference type="ChEBI" id="CHEBI:60539"/>
    </ligand>
</feature>
<feature type="binding site" evidence="1">
    <location>
        <position position="530"/>
    </location>
    <ligand>
        <name>Mo-bis(molybdopterin guanine dinucleotide)</name>
        <dbReference type="ChEBI" id="CHEBI:60539"/>
    </ligand>
</feature>
<feature type="binding site" evidence="1">
    <location>
        <position position="557"/>
    </location>
    <ligand>
        <name>Mo-bis(molybdopterin guanine dinucleotide)</name>
        <dbReference type="ChEBI" id="CHEBI:60539"/>
    </ligand>
</feature>
<feature type="binding site" evidence="1">
    <location>
        <begin position="717"/>
        <end position="726"/>
    </location>
    <ligand>
        <name>Mo-bis(molybdopterin guanine dinucleotide)</name>
        <dbReference type="ChEBI" id="CHEBI:60539"/>
    </ligand>
</feature>
<feature type="binding site" evidence="1">
    <location>
        <position position="793"/>
    </location>
    <ligand>
        <name>substrate</name>
    </ligand>
</feature>
<feature type="binding site" evidence="1">
    <location>
        <position position="801"/>
    </location>
    <ligand>
        <name>Mo-bis(molybdopterin guanine dinucleotide)</name>
        <dbReference type="ChEBI" id="CHEBI:60539"/>
    </ligand>
</feature>
<feature type="binding site" evidence="1">
    <location>
        <position position="818"/>
    </location>
    <ligand>
        <name>Mo-bis(molybdopterin guanine dinucleotide)</name>
        <dbReference type="ChEBI" id="CHEBI:60539"/>
    </ligand>
</feature>
<reference key="1">
    <citation type="submission" date="2008-06" db="EMBL/GenBank/DDBJ databases">
        <title>Genome and proteome analysis of A. pleuropneumoniae serotype 7.</title>
        <authorList>
            <person name="Linke B."/>
            <person name="Buettner F."/>
            <person name="Martinez-Arias R."/>
            <person name="Goesmann A."/>
            <person name="Baltes N."/>
            <person name="Tegetmeyer H."/>
            <person name="Singh M."/>
            <person name="Gerlach G.F."/>
        </authorList>
    </citation>
    <scope>NUCLEOTIDE SEQUENCE [LARGE SCALE GENOMIC DNA]</scope>
    <source>
        <strain>AP76</strain>
    </source>
</reference>
<keyword id="KW-0004">4Fe-4S</keyword>
<keyword id="KW-0249">Electron transport</keyword>
<keyword id="KW-0408">Iron</keyword>
<keyword id="KW-0411">Iron-sulfur</keyword>
<keyword id="KW-0479">Metal-binding</keyword>
<keyword id="KW-0500">Molybdenum</keyword>
<keyword id="KW-0534">Nitrate assimilation</keyword>
<keyword id="KW-0560">Oxidoreductase</keyword>
<keyword id="KW-0574">Periplasm</keyword>
<keyword id="KW-0732">Signal</keyword>
<keyword id="KW-0813">Transport</keyword>
<gene>
    <name evidence="1" type="primary">napA</name>
    <name type="ordered locus">APP7_1504</name>
</gene>
<sequence>MELNRRDFMKANAAMAAAAAAGMTIPVKNVYAADDGIRWDKAPCRFCGTGCSVLVGTKDGRVVATQGDPDAEVNRGLNCIKGYFLSKIMYGADRVQTPLLRMKDGKFHKEGDFTPVSWDQAFTIMAEKVKDILKKKEPNSVGMFSSGQTTIFEGYAKVKLWKGGLRSNTIDPNARHCMASAAVAFMRTFGMDEPMGCYNDIEKTDAFVLWGSNMAEMHPILWSRISDRRLSDDKVKVVVMSTFEHRSFELADTPIIFKPHSDLAILNYIANYIIQNDKVNWDFVNKHTKFKRGETDIGYGLRPDHPRQKAAKNAKTAGKMYDSDFEEFKKIVEPYTLEKAHEISGVPKDQLETLAKMYADPKQTLVSFWTMGFNQHVRGVWVNHMVYNVHLLTGKISTPGCGPFSLTGQPSACGTAREVGTFVHRLPADMVVTNPKHVEIVEKAWKLPKGTIPTVPGYPAVMQSRMLKDGKLNFLWQLCTNNMQGGPNINEEIFPGWRNPENFIVVSDPYPSVSAVAADLILPTCMWVEKEGAYGNAERRTQFWRQQVKGPGESKSDLWQIVEFSKYFKTDEVWDEALLAQMPEYRGKTLYEVLYKNGQVDKFDTPTNIPGYINDEAEHFGYYLQKGLFEEYAAFGRGHGHDLADFDTYHQVRGLRWPVVDGKETLWRYREGFDPYVKAGEGVSFYGYPDKKAIILGVPYEEPAESPDEEYDLWLCTGRVLEHWHTGTMTRRVPELHRSFPNNLCWMHPDDAKARGLRHGDKVKLITRRGEIITHLDTRGRNKCPKGLIYTTFFDAGQLANKLTLDATDPISGETDYKKCAVKVVKA</sequence>
<organism>
    <name type="scientific">Actinobacillus pleuropneumoniae serotype 7 (strain AP76)</name>
    <dbReference type="NCBI Taxonomy" id="537457"/>
    <lineage>
        <taxon>Bacteria</taxon>
        <taxon>Pseudomonadati</taxon>
        <taxon>Pseudomonadota</taxon>
        <taxon>Gammaproteobacteria</taxon>
        <taxon>Pasteurellales</taxon>
        <taxon>Pasteurellaceae</taxon>
        <taxon>Actinobacillus</taxon>
    </lineage>
</organism>
<name>NAPA_ACTP7</name>
<protein>
    <recommendedName>
        <fullName evidence="1">Periplasmic nitrate reductase</fullName>
        <ecNumber evidence="1">1.9.6.1</ecNumber>
    </recommendedName>
</protein>
<comment type="function">
    <text evidence="1">Catalytic subunit of the periplasmic nitrate reductase complex NapAB. Receives electrons from NapB and catalyzes the reduction of nitrate to nitrite.</text>
</comment>
<comment type="catalytic activity">
    <reaction evidence="1">
        <text>2 Fe(II)-[cytochrome] + nitrate + 2 H(+) = 2 Fe(III)-[cytochrome] + nitrite + H2O</text>
        <dbReference type="Rhea" id="RHEA:12909"/>
        <dbReference type="Rhea" id="RHEA-COMP:11777"/>
        <dbReference type="Rhea" id="RHEA-COMP:11778"/>
        <dbReference type="ChEBI" id="CHEBI:15377"/>
        <dbReference type="ChEBI" id="CHEBI:15378"/>
        <dbReference type="ChEBI" id="CHEBI:16301"/>
        <dbReference type="ChEBI" id="CHEBI:17632"/>
        <dbReference type="ChEBI" id="CHEBI:29033"/>
        <dbReference type="ChEBI" id="CHEBI:29034"/>
        <dbReference type="EC" id="1.9.6.1"/>
    </reaction>
</comment>
<comment type="cofactor">
    <cofactor evidence="1">
        <name>[4Fe-4S] cluster</name>
        <dbReference type="ChEBI" id="CHEBI:49883"/>
    </cofactor>
    <text evidence="1">Binds 1 [4Fe-4S] cluster.</text>
</comment>
<comment type="cofactor">
    <cofactor evidence="1">
        <name>Mo-bis(molybdopterin guanine dinucleotide)</name>
        <dbReference type="ChEBI" id="CHEBI:60539"/>
    </cofactor>
    <text evidence="1">Binds 1 molybdenum-bis(molybdopterin guanine dinucleotide) (Mo-bis-MGD) cofactor per subunit.</text>
</comment>
<comment type="subunit">
    <text evidence="1">Component of the periplasmic nitrate reductase NapAB complex composed of NapA and NapB.</text>
</comment>
<comment type="subcellular location">
    <subcellularLocation>
        <location evidence="1">Periplasm</location>
    </subcellularLocation>
</comment>
<comment type="PTM">
    <text evidence="1">Predicted to be exported by the Tat system. The position of the signal peptide cleavage has not been experimentally proven.</text>
</comment>
<comment type="similarity">
    <text evidence="1">Belongs to the prokaryotic molybdopterin-containing oxidoreductase family. NasA/NapA/NarB subfamily.</text>
</comment>
<accession>B3H2D1</accession>